<dbReference type="EC" id="2.1.1.192" evidence="1"/>
<dbReference type="EMBL" id="AM040264">
    <property type="protein sequence ID" value="CAJ10030.1"/>
    <property type="molecule type" value="Genomic_DNA"/>
</dbReference>
<dbReference type="RefSeq" id="WP_002965326.1">
    <property type="nucleotide sequence ID" value="NZ_KN046823.1"/>
</dbReference>
<dbReference type="SMR" id="Q2YNV3"/>
<dbReference type="STRING" id="359391.BAB1_0074"/>
<dbReference type="GeneID" id="93017444"/>
<dbReference type="KEGG" id="bmf:BAB1_0074"/>
<dbReference type="PATRIC" id="fig|359391.11.peg.1498"/>
<dbReference type="HOGENOM" id="CLU_029101_2_0_5"/>
<dbReference type="PhylomeDB" id="Q2YNV3"/>
<dbReference type="Proteomes" id="UP000002719">
    <property type="component" value="Chromosome I"/>
</dbReference>
<dbReference type="GO" id="GO:0005737">
    <property type="term" value="C:cytoplasm"/>
    <property type="evidence" value="ECO:0007669"/>
    <property type="project" value="UniProtKB-SubCell"/>
</dbReference>
<dbReference type="GO" id="GO:0051539">
    <property type="term" value="F:4 iron, 4 sulfur cluster binding"/>
    <property type="evidence" value="ECO:0007669"/>
    <property type="project" value="UniProtKB-UniRule"/>
</dbReference>
<dbReference type="GO" id="GO:0046872">
    <property type="term" value="F:metal ion binding"/>
    <property type="evidence" value="ECO:0007669"/>
    <property type="project" value="UniProtKB-KW"/>
</dbReference>
<dbReference type="GO" id="GO:0070040">
    <property type="term" value="F:rRNA (adenine(2503)-C2-)-methyltransferase activity"/>
    <property type="evidence" value="ECO:0007669"/>
    <property type="project" value="UniProtKB-UniRule"/>
</dbReference>
<dbReference type="GO" id="GO:0019843">
    <property type="term" value="F:rRNA binding"/>
    <property type="evidence" value="ECO:0007669"/>
    <property type="project" value="UniProtKB-UniRule"/>
</dbReference>
<dbReference type="GO" id="GO:0002935">
    <property type="term" value="F:tRNA (adenine(37)-C2)-methyltransferase activity"/>
    <property type="evidence" value="ECO:0007669"/>
    <property type="project" value="UniProtKB-UniRule"/>
</dbReference>
<dbReference type="GO" id="GO:0000049">
    <property type="term" value="F:tRNA binding"/>
    <property type="evidence" value="ECO:0007669"/>
    <property type="project" value="UniProtKB-UniRule"/>
</dbReference>
<dbReference type="GO" id="GO:0070475">
    <property type="term" value="P:rRNA base methylation"/>
    <property type="evidence" value="ECO:0007669"/>
    <property type="project" value="UniProtKB-UniRule"/>
</dbReference>
<dbReference type="GO" id="GO:0030488">
    <property type="term" value="P:tRNA methylation"/>
    <property type="evidence" value="ECO:0007669"/>
    <property type="project" value="UniProtKB-UniRule"/>
</dbReference>
<dbReference type="CDD" id="cd01335">
    <property type="entry name" value="Radical_SAM"/>
    <property type="match status" value="1"/>
</dbReference>
<dbReference type="FunFam" id="3.20.20.70:FF:000008">
    <property type="entry name" value="Dual-specificity RNA methyltransferase RlmN"/>
    <property type="match status" value="1"/>
</dbReference>
<dbReference type="Gene3D" id="1.10.150.530">
    <property type="match status" value="1"/>
</dbReference>
<dbReference type="Gene3D" id="3.20.20.70">
    <property type="entry name" value="Aldolase class I"/>
    <property type="match status" value="1"/>
</dbReference>
<dbReference type="HAMAP" id="MF_01849">
    <property type="entry name" value="RNA_methyltr_RlmN"/>
    <property type="match status" value="1"/>
</dbReference>
<dbReference type="InterPro" id="IPR013785">
    <property type="entry name" value="Aldolase_TIM"/>
</dbReference>
<dbReference type="InterPro" id="IPR040072">
    <property type="entry name" value="Methyltransferase_A"/>
</dbReference>
<dbReference type="InterPro" id="IPR048641">
    <property type="entry name" value="RlmN_N"/>
</dbReference>
<dbReference type="InterPro" id="IPR027492">
    <property type="entry name" value="RNA_MTrfase_RlmN"/>
</dbReference>
<dbReference type="InterPro" id="IPR004383">
    <property type="entry name" value="rRNA_lsu_MTrfase_RlmN/Cfr"/>
</dbReference>
<dbReference type="InterPro" id="IPR007197">
    <property type="entry name" value="rSAM"/>
</dbReference>
<dbReference type="NCBIfam" id="TIGR00048">
    <property type="entry name" value="rRNA_mod_RlmN"/>
    <property type="match status" value="1"/>
</dbReference>
<dbReference type="PANTHER" id="PTHR30544">
    <property type="entry name" value="23S RRNA METHYLTRANSFERASE"/>
    <property type="match status" value="1"/>
</dbReference>
<dbReference type="PANTHER" id="PTHR30544:SF5">
    <property type="entry name" value="RADICAL SAM CORE DOMAIN-CONTAINING PROTEIN"/>
    <property type="match status" value="1"/>
</dbReference>
<dbReference type="Pfam" id="PF04055">
    <property type="entry name" value="Radical_SAM"/>
    <property type="match status" value="1"/>
</dbReference>
<dbReference type="Pfam" id="PF21016">
    <property type="entry name" value="RlmN_N"/>
    <property type="match status" value="1"/>
</dbReference>
<dbReference type="PIRSF" id="PIRSF006004">
    <property type="entry name" value="CHP00048"/>
    <property type="match status" value="1"/>
</dbReference>
<dbReference type="SFLD" id="SFLDF00275">
    <property type="entry name" value="adenosine_C2_methyltransferase"/>
    <property type="match status" value="1"/>
</dbReference>
<dbReference type="SFLD" id="SFLDG01062">
    <property type="entry name" value="methyltransferase_(Class_A)"/>
    <property type="match status" value="1"/>
</dbReference>
<dbReference type="SUPFAM" id="SSF102114">
    <property type="entry name" value="Radical SAM enzymes"/>
    <property type="match status" value="1"/>
</dbReference>
<dbReference type="PROSITE" id="PS51918">
    <property type="entry name" value="RADICAL_SAM"/>
    <property type="match status" value="1"/>
</dbReference>
<gene>
    <name evidence="1" type="primary">rlmN</name>
    <name type="ordered locus">BAB1_0074</name>
</gene>
<organism>
    <name type="scientific">Brucella abortus (strain 2308)</name>
    <dbReference type="NCBI Taxonomy" id="359391"/>
    <lineage>
        <taxon>Bacteria</taxon>
        <taxon>Pseudomonadati</taxon>
        <taxon>Pseudomonadota</taxon>
        <taxon>Alphaproteobacteria</taxon>
        <taxon>Hyphomicrobiales</taxon>
        <taxon>Brucellaceae</taxon>
        <taxon>Brucella/Ochrobactrum group</taxon>
        <taxon>Brucella</taxon>
    </lineage>
</organism>
<comment type="function">
    <text evidence="1">Specifically methylates position 2 of adenine 2503 in 23S rRNA and position 2 of adenine 37 in tRNAs. m2A2503 modification seems to play a crucial role in the proofreading step occurring at the peptidyl transferase center and thus would serve to optimize ribosomal fidelity.</text>
</comment>
<comment type="catalytic activity">
    <reaction evidence="1">
        <text>adenosine(2503) in 23S rRNA + 2 reduced [2Fe-2S]-[ferredoxin] + 2 S-adenosyl-L-methionine = 2-methyladenosine(2503) in 23S rRNA + 5'-deoxyadenosine + L-methionine + 2 oxidized [2Fe-2S]-[ferredoxin] + S-adenosyl-L-homocysteine</text>
        <dbReference type="Rhea" id="RHEA:42916"/>
        <dbReference type="Rhea" id="RHEA-COMP:10000"/>
        <dbReference type="Rhea" id="RHEA-COMP:10001"/>
        <dbReference type="Rhea" id="RHEA-COMP:10152"/>
        <dbReference type="Rhea" id="RHEA-COMP:10282"/>
        <dbReference type="ChEBI" id="CHEBI:17319"/>
        <dbReference type="ChEBI" id="CHEBI:33737"/>
        <dbReference type="ChEBI" id="CHEBI:33738"/>
        <dbReference type="ChEBI" id="CHEBI:57844"/>
        <dbReference type="ChEBI" id="CHEBI:57856"/>
        <dbReference type="ChEBI" id="CHEBI:59789"/>
        <dbReference type="ChEBI" id="CHEBI:74411"/>
        <dbReference type="ChEBI" id="CHEBI:74497"/>
        <dbReference type="EC" id="2.1.1.192"/>
    </reaction>
</comment>
<comment type="catalytic activity">
    <reaction evidence="1">
        <text>adenosine(37) in tRNA + 2 reduced [2Fe-2S]-[ferredoxin] + 2 S-adenosyl-L-methionine = 2-methyladenosine(37) in tRNA + 5'-deoxyadenosine + L-methionine + 2 oxidized [2Fe-2S]-[ferredoxin] + S-adenosyl-L-homocysteine</text>
        <dbReference type="Rhea" id="RHEA:43332"/>
        <dbReference type="Rhea" id="RHEA-COMP:10000"/>
        <dbReference type="Rhea" id="RHEA-COMP:10001"/>
        <dbReference type="Rhea" id="RHEA-COMP:10162"/>
        <dbReference type="Rhea" id="RHEA-COMP:10485"/>
        <dbReference type="ChEBI" id="CHEBI:17319"/>
        <dbReference type="ChEBI" id="CHEBI:33737"/>
        <dbReference type="ChEBI" id="CHEBI:33738"/>
        <dbReference type="ChEBI" id="CHEBI:57844"/>
        <dbReference type="ChEBI" id="CHEBI:57856"/>
        <dbReference type="ChEBI" id="CHEBI:59789"/>
        <dbReference type="ChEBI" id="CHEBI:74411"/>
        <dbReference type="ChEBI" id="CHEBI:74497"/>
        <dbReference type="EC" id="2.1.1.192"/>
    </reaction>
</comment>
<comment type="cofactor">
    <cofactor evidence="1">
        <name>[4Fe-4S] cluster</name>
        <dbReference type="ChEBI" id="CHEBI:49883"/>
    </cofactor>
    <text evidence="1">Binds 1 [4Fe-4S] cluster. The cluster is coordinated with 3 cysteines and an exchangeable S-adenosyl-L-methionine.</text>
</comment>
<comment type="subcellular location">
    <subcellularLocation>
        <location evidence="1">Cytoplasm</location>
    </subcellularLocation>
</comment>
<comment type="miscellaneous">
    <text evidence="1">Reaction proceeds by a ping-pong mechanism involving intermediate methylation of a conserved cysteine residue.</text>
</comment>
<comment type="similarity">
    <text evidence="1">Belongs to the radical SAM superfamily. RlmN family.</text>
</comment>
<protein>
    <recommendedName>
        <fullName evidence="1">Dual-specificity RNA methyltransferase RlmN</fullName>
        <ecNumber evidence="1">2.1.1.192</ecNumber>
    </recommendedName>
    <alternativeName>
        <fullName evidence="1">23S rRNA (adenine(2503)-C(2))-methyltransferase</fullName>
    </alternativeName>
    <alternativeName>
        <fullName evidence="1">23S rRNA m2A2503 methyltransferase</fullName>
    </alternativeName>
    <alternativeName>
        <fullName evidence="1">Ribosomal RNA large subunit methyltransferase N</fullName>
    </alternativeName>
    <alternativeName>
        <fullName evidence="1">tRNA (adenine(37)-C(2))-methyltransferase</fullName>
    </alternativeName>
    <alternativeName>
        <fullName evidence="1">tRNA m2A37 methyltransferase</fullName>
    </alternativeName>
</protein>
<keyword id="KW-0004">4Fe-4S</keyword>
<keyword id="KW-0963">Cytoplasm</keyword>
<keyword id="KW-1015">Disulfide bond</keyword>
<keyword id="KW-0408">Iron</keyword>
<keyword id="KW-0411">Iron-sulfur</keyword>
<keyword id="KW-0479">Metal-binding</keyword>
<keyword id="KW-0489">Methyltransferase</keyword>
<keyword id="KW-1185">Reference proteome</keyword>
<keyword id="KW-0698">rRNA processing</keyword>
<keyword id="KW-0949">S-adenosyl-L-methionine</keyword>
<keyword id="KW-0808">Transferase</keyword>
<keyword id="KW-0819">tRNA processing</keyword>
<accession>Q2YNV3</accession>
<sequence>MSISFDLTIDDTRDQLARHARASLEAKPSLIGMSREEMAAALIAAGVPERQVKMRISQLWHWLYVRGVSDFADMRNISKDLRAMLAQHFTIARPEVVEEQISQDGTRKWLFRFPPRGAGRPVEIESVYIPEEGRGTLCISSQVGCTLTCSFCHTGTQKLVRNLTSEEILAQLLTARDRLGDFPDKDTPDGAMVPAEGRKITNIVMMGMGEPLYNFEEVKKALLIASDGDGLSLSKCRITLSTSGVVPEIYRTGDEIGVMLAISLHAVRDELRDILVPINKKYPLAELIKACREYPGLSNAKRITFEYVMLKDINDSLDDAKLLVKLLQGIPAKINLIPFNPWPGTNYQCSDWEQIEKFADYVNAAGYASPIRTPRGRDILAACGQLKSESERLRKSERLALEAMMIAGHGE</sequence>
<proteinExistence type="inferred from homology"/>
<feature type="chain" id="PRO_0000350063" description="Dual-specificity RNA methyltransferase RlmN">
    <location>
        <begin position="1"/>
        <end position="411"/>
    </location>
</feature>
<feature type="domain" description="Radical SAM core" evidence="2">
    <location>
        <begin position="131"/>
        <end position="380"/>
    </location>
</feature>
<feature type="active site" description="Proton acceptor" evidence="1">
    <location>
        <position position="125"/>
    </location>
</feature>
<feature type="active site" description="S-methylcysteine intermediate" evidence="1">
    <location>
        <position position="383"/>
    </location>
</feature>
<feature type="binding site" evidence="1">
    <location>
        <position position="145"/>
    </location>
    <ligand>
        <name>[4Fe-4S] cluster</name>
        <dbReference type="ChEBI" id="CHEBI:49883"/>
        <note>4Fe-4S-S-AdoMet</note>
    </ligand>
</feature>
<feature type="binding site" evidence="1">
    <location>
        <position position="149"/>
    </location>
    <ligand>
        <name>[4Fe-4S] cluster</name>
        <dbReference type="ChEBI" id="CHEBI:49883"/>
        <note>4Fe-4S-S-AdoMet</note>
    </ligand>
</feature>
<feature type="binding site" evidence="1">
    <location>
        <position position="152"/>
    </location>
    <ligand>
        <name>[4Fe-4S] cluster</name>
        <dbReference type="ChEBI" id="CHEBI:49883"/>
        <note>4Fe-4S-S-AdoMet</note>
    </ligand>
</feature>
<feature type="binding site" evidence="1">
    <location>
        <begin position="209"/>
        <end position="210"/>
    </location>
    <ligand>
        <name>S-adenosyl-L-methionine</name>
        <dbReference type="ChEBI" id="CHEBI:59789"/>
    </ligand>
</feature>
<feature type="binding site" evidence="1">
    <location>
        <position position="241"/>
    </location>
    <ligand>
        <name>S-adenosyl-L-methionine</name>
        <dbReference type="ChEBI" id="CHEBI:59789"/>
    </ligand>
</feature>
<feature type="binding site" evidence="1">
    <location>
        <begin position="263"/>
        <end position="265"/>
    </location>
    <ligand>
        <name>S-adenosyl-L-methionine</name>
        <dbReference type="ChEBI" id="CHEBI:59789"/>
    </ligand>
</feature>
<feature type="binding site" evidence="1">
    <location>
        <position position="340"/>
    </location>
    <ligand>
        <name>S-adenosyl-L-methionine</name>
        <dbReference type="ChEBI" id="CHEBI:59789"/>
    </ligand>
</feature>
<feature type="disulfide bond" description="(transient)" evidence="1">
    <location>
        <begin position="138"/>
        <end position="383"/>
    </location>
</feature>
<reference key="1">
    <citation type="journal article" date="2005" name="Infect. Immun.">
        <title>Whole-genome analyses of speciation events in pathogenic Brucellae.</title>
        <authorList>
            <person name="Chain P.S."/>
            <person name="Comerci D.J."/>
            <person name="Tolmasky M.E."/>
            <person name="Larimer F.W."/>
            <person name="Malfatti S.A."/>
            <person name="Vergez L.M."/>
            <person name="Aguero F."/>
            <person name="Land M.L."/>
            <person name="Ugalde R.A."/>
            <person name="Garcia E."/>
        </authorList>
    </citation>
    <scope>NUCLEOTIDE SEQUENCE [LARGE SCALE GENOMIC DNA]</scope>
    <source>
        <strain>2308</strain>
    </source>
</reference>
<name>RLMN_BRUA2</name>
<evidence type="ECO:0000255" key="1">
    <source>
        <dbReference type="HAMAP-Rule" id="MF_01849"/>
    </source>
</evidence>
<evidence type="ECO:0000255" key="2">
    <source>
        <dbReference type="PROSITE-ProRule" id="PRU01266"/>
    </source>
</evidence>